<proteinExistence type="inferred from homology"/>
<sequence>MKCPFCSHLETQVIETRVFEDAASIRRRRQCAACSKRFTTYERSDVSFPAVVKKDGRRVEYGHDKLLASFKLALRKRPVSTGRIDSAIERIEEKLLNLGLREVPSSRIGELVMRELKKLDKVAYIRFASVYRSFEGIDDFRALVDEVRK</sequence>
<feature type="chain" id="PRO_1000080853" description="Transcriptional repressor NrdR">
    <location>
        <begin position="1"/>
        <end position="149"/>
    </location>
</feature>
<feature type="domain" description="ATP-cone" evidence="1">
    <location>
        <begin position="49"/>
        <end position="139"/>
    </location>
</feature>
<feature type="zinc finger region" evidence="1">
    <location>
        <begin position="3"/>
        <end position="34"/>
    </location>
</feature>
<comment type="function">
    <text evidence="1">Negatively regulates transcription of bacterial ribonucleotide reductase nrd genes and operons by binding to NrdR-boxes.</text>
</comment>
<comment type="cofactor">
    <cofactor evidence="1">
        <name>Zn(2+)</name>
        <dbReference type="ChEBI" id="CHEBI:29105"/>
    </cofactor>
    <text evidence="1">Binds 1 zinc ion.</text>
</comment>
<comment type="similarity">
    <text evidence="1">Belongs to the NrdR family.</text>
</comment>
<protein>
    <recommendedName>
        <fullName evidence="1">Transcriptional repressor NrdR</fullName>
    </recommendedName>
</protein>
<reference key="1">
    <citation type="submission" date="2006-12" db="EMBL/GenBank/DDBJ databases">
        <title>Complete sequence of chromosome 1 of Verminephrobacter eiseniae EF01-2.</title>
        <authorList>
            <person name="Copeland A."/>
            <person name="Lucas S."/>
            <person name="Lapidus A."/>
            <person name="Barry K."/>
            <person name="Detter J.C."/>
            <person name="Glavina del Rio T."/>
            <person name="Dalin E."/>
            <person name="Tice H."/>
            <person name="Pitluck S."/>
            <person name="Chertkov O."/>
            <person name="Brettin T."/>
            <person name="Bruce D."/>
            <person name="Han C."/>
            <person name="Tapia R."/>
            <person name="Gilna P."/>
            <person name="Schmutz J."/>
            <person name="Larimer F."/>
            <person name="Land M."/>
            <person name="Hauser L."/>
            <person name="Kyrpides N."/>
            <person name="Kim E."/>
            <person name="Stahl D."/>
            <person name="Richardson P."/>
        </authorList>
    </citation>
    <scope>NUCLEOTIDE SEQUENCE [LARGE SCALE GENOMIC DNA]</scope>
    <source>
        <strain>EF01-2</strain>
    </source>
</reference>
<organism>
    <name type="scientific">Verminephrobacter eiseniae (strain EF01-2)</name>
    <dbReference type="NCBI Taxonomy" id="391735"/>
    <lineage>
        <taxon>Bacteria</taxon>
        <taxon>Pseudomonadati</taxon>
        <taxon>Pseudomonadota</taxon>
        <taxon>Betaproteobacteria</taxon>
        <taxon>Burkholderiales</taxon>
        <taxon>Comamonadaceae</taxon>
        <taxon>Verminephrobacter</taxon>
    </lineage>
</organism>
<gene>
    <name evidence="1" type="primary">nrdR</name>
    <name type="ordered locus">Veis_4247</name>
</gene>
<name>NRDR_VEREI</name>
<dbReference type="EMBL" id="CP000542">
    <property type="protein sequence ID" value="ABM59952.1"/>
    <property type="molecule type" value="Genomic_DNA"/>
</dbReference>
<dbReference type="RefSeq" id="WP_011811939.1">
    <property type="nucleotide sequence ID" value="NC_008786.1"/>
</dbReference>
<dbReference type="SMR" id="A1WQP5"/>
<dbReference type="STRING" id="391735.Veis_4247"/>
<dbReference type="GeneID" id="76462573"/>
<dbReference type="KEGG" id="vei:Veis_4247"/>
<dbReference type="eggNOG" id="COG1327">
    <property type="taxonomic scope" value="Bacteria"/>
</dbReference>
<dbReference type="HOGENOM" id="CLU_108412_0_1_4"/>
<dbReference type="OrthoDB" id="9807461at2"/>
<dbReference type="Proteomes" id="UP000000374">
    <property type="component" value="Chromosome"/>
</dbReference>
<dbReference type="GO" id="GO:0005524">
    <property type="term" value="F:ATP binding"/>
    <property type="evidence" value="ECO:0007669"/>
    <property type="project" value="UniProtKB-KW"/>
</dbReference>
<dbReference type="GO" id="GO:0003677">
    <property type="term" value="F:DNA binding"/>
    <property type="evidence" value="ECO:0007669"/>
    <property type="project" value="UniProtKB-KW"/>
</dbReference>
<dbReference type="GO" id="GO:0008270">
    <property type="term" value="F:zinc ion binding"/>
    <property type="evidence" value="ECO:0007669"/>
    <property type="project" value="UniProtKB-UniRule"/>
</dbReference>
<dbReference type="GO" id="GO:0045892">
    <property type="term" value="P:negative regulation of DNA-templated transcription"/>
    <property type="evidence" value="ECO:0007669"/>
    <property type="project" value="UniProtKB-UniRule"/>
</dbReference>
<dbReference type="HAMAP" id="MF_00440">
    <property type="entry name" value="NrdR"/>
    <property type="match status" value="1"/>
</dbReference>
<dbReference type="InterPro" id="IPR005144">
    <property type="entry name" value="ATP-cone_dom"/>
</dbReference>
<dbReference type="InterPro" id="IPR055173">
    <property type="entry name" value="NrdR-like_N"/>
</dbReference>
<dbReference type="InterPro" id="IPR003796">
    <property type="entry name" value="RNR_NrdR-like"/>
</dbReference>
<dbReference type="NCBIfam" id="TIGR00244">
    <property type="entry name" value="transcriptional regulator NrdR"/>
    <property type="match status" value="1"/>
</dbReference>
<dbReference type="PANTHER" id="PTHR30455">
    <property type="entry name" value="TRANSCRIPTIONAL REPRESSOR NRDR"/>
    <property type="match status" value="1"/>
</dbReference>
<dbReference type="PANTHER" id="PTHR30455:SF2">
    <property type="entry name" value="TRANSCRIPTIONAL REPRESSOR NRDR"/>
    <property type="match status" value="1"/>
</dbReference>
<dbReference type="Pfam" id="PF03477">
    <property type="entry name" value="ATP-cone"/>
    <property type="match status" value="1"/>
</dbReference>
<dbReference type="Pfam" id="PF22811">
    <property type="entry name" value="Zn_ribbon_NrdR"/>
    <property type="match status" value="1"/>
</dbReference>
<dbReference type="PROSITE" id="PS51161">
    <property type="entry name" value="ATP_CONE"/>
    <property type="match status" value="1"/>
</dbReference>
<accession>A1WQP5</accession>
<evidence type="ECO:0000255" key="1">
    <source>
        <dbReference type="HAMAP-Rule" id="MF_00440"/>
    </source>
</evidence>
<keyword id="KW-0067">ATP-binding</keyword>
<keyword id="KW-0238">DNA-binding</keyword>
<keyword id="KW-0479">Metal-binding</keyword>
<keyword id="KW-0547">Nucleotide-binding</keyword>
<keyword id="KW-1185">Reference proteome</keyword>
<keyword id="KW-0678">Repressor</keyword>
<keyword id="KW-0804">Transcription</keyword>
<keyword id="KW-0805">Transcription regulation</keyword>
<keyword id="KW-0862">Zinc</keyword>
<keyword id="KW-0863">Zinc-finger</keyword>